<protein>
    <recommendedName>
        <fullName evidence="3">Large ribosomal subunit protein uL10</fullName>
    </recommendedName>
    <alternativeName>
        <fullName>60S acidic ribosomal protein P0</fullName>
    </alternativeName>
</protein>
<keyword id="KW-0597">Phosphoprotein</keyword>
<keyword id="KW-0687">Ribonucleoprotein</keyword>
<keyword id="KW-0689">Ribosomal protein</keyword>
<name>RLA0_LEIIN</name>
<dbReference type="EMBL" id="X72714">
    <property type="protein sequence ID" value="CAA51264.1"/>
    <property type="molecule type" value="Genomic_DNA"/>
</dbReference>
<dbReference type="EMBL" id="X72714">
    <property type="protein sequence ID" value="CAA51263.1"/>
    <property type="molecule type" value="Genomic_DNA"/>
</dbReference>
<dbReference type="SMR" id="P39097"/>
<dbReference type="VEuPathDB" id="TriTrypDB:LINF_270020500"/>
<dbReference type="eggNOG" id="KOG0815">
    <property type="taxonomic scope" value="Eukaryota"/>
</dbReference>
<dbReference type="GO" id="GO:0022625">
    <property type="term" value="C:cytosolic large ribosomal subunit"/>
    <property type="evidence" value="ECO:0007669"/>
    <property type="project" value="TreeGrafter"/>
</dbReference>
<dbReference type="GO" id="GO:0070180">
    <property type="term" value="F:large ribosomal subunit rRNA binding"/>
    <property type="evidence" value="ECO:0007669"/>
    <property type="project" value="TreeGrafter"/>
</dbReference>
<dbReference type="GO" id="GO:0003735">
    <property type="term" value="F:structural constituent of ribosome"/>
    <property type="evidence" value="ECO:0007669"/>
    <property type="project" value="TreeGrafter"/>
</dbReference>
<dbReference type="GO" id="GO:0002181">
    <property type="term" value="P:cytoplasmic translation"/>
    <property type="evidence" value="ECO:0007669"/>
    <property type="project" value="TreeGrafter"/>
</dbReference>
<dbReference type="GO" id="GO:0000027">
    <property type="term" value="P:ribosomal large subunit assembly"/>
    <property type="evidence" value="ECO:0007669"/>
    <property type="project" value="TreeGrafter"/>
</dbReference>
<dbReference type="CDD" id="cd05795">
    <property type="entry name" value="Ribosomal_P0_L10e"/>
    <property type="match status" value="1"/>
</dbReference>
<dbReference type="FunFam" id="3.90.105.20:FF:000001">
    <property type="entry name" value="60S acidic ribosomal protein P0"/>
    <property type="match status" value="1"/>
</dbReference>
<dbReference type="FunFam" id="3.30.70.1730:FF:000005">
    <property type="entry name" value="Ribosome assembly factor mrt4"/>
    <property type="match status" value="1"/>
</dbReference>
<dbReference type="Gene3D" id="3.30.70.1730">
    <property type="match status" value="1"/>
</dbReference>
<dbReference type="Gene3D" id="3.90.105.20">
    <property type="match status" value="1"/>
</dbReference>
<dbReference type="InterPro" id="IPR050323">
    <property type="entry name" value="Ribosomal_protein_uL10"/>
</dbReference>
<dbReference type="InterPro" id="IPR001790">
    <property type="entry name" value="Ribosomal_uL10"/>
</dbReference>
<dbReference type="InterPro" id="IPR040637">
    <property type="entry name" value="Ribosomal_uL10-like_insert"/>
</dbReference>
<dbReference type="InterPro" id="IPR043164">
    <property type="entry name" value="Ribosomal_uL10-like_insert_sf"/>
</dbReference>
<dbReference type="InterPro" id="IPR043141">
    <property type="entry name" value="Ribosomal_uL10-like_sf"/>
</dbReference>
<dbReference type="InterPro" id="IPR030670">
    <property type="entry name" value="uL10_eukaryotes"/>
</dbReference>
<dbReference type="PANTHER" id="PTHR45699">
    <property type="entry name" value="60S ACIDIC RIBOSOMAL PROTEIN P0"/>
    <property type="match status" value="1"/>
</dbReference>
<dbReference type="PANTHER" id="PTHR45699:SF3">
    <property type="entry name" value="LARGE RIBOSOMAL SUBUNIT PROTEIN UL10"/>
    <property type="match status" value="1"/>
</dbReference>
<dbReference type="Pfam" id="PF00428">
    <property type="entry name" value="Ribosomal_60s"/>
    <property type="match status" value="1"/>
</dbReference>
<dbReference type="Pfam" id="PF00466">
    <property type="entry name" value="Ribosomal_L10"/>
    <property type="match status" value="1"/>
</dbReference>
<dbReference type="Pfam" id="PF17777">
    <property type="entry name" value="RL10P_insert"/>
    <property type="match status" value="1"/>
</dbReference>
<dbReference type="PIRSF" id="PIRSF039087">
    <property type="entry name" value="L10E"/>
    <property type="match status" value="1"/>
</dbReference>
<dbReference type="SUPFAM" id="SSF160369">
    <property type="entry name" value="Ribosomal protein L10-like"/>
    <property type="match status" value="1"/>
</dbReference>
<reference key="1">
    <citation type="journal article" date="1993" name="Mol. Biochem. Parasitol.">
        <title>Isolation, characterization and analysis of the expression of the Leishmania ribosomal PO protein genes.</title>
        <authorList>
            <person name="Soto M."/>
            <person name="Requena J.M."/>
            <person name="Alonso C."/>
        </authorList>
    </citation>
    <scope>NUCLEOTIDE SEQUENCE [GENOMIC DNA]</scope>
    <source>
        <strain>MHOM/FR/78/LEM 75</strain>
    </source>
</reference>
<gene>
    <name type="primary">LIPO-A</name>
</gene>
<gene>
    <name type="primary">LIPO-B</name>
</gene>
<comment type="function">
    <text>Ribosomal protein P0 is the functional equivalent of E.coli protein L10.</text>
</comment>
<comment type="subunit">
    <text>P0 forms a pentameric complex by interaction with dimers of P1 and P2.</text>
</comment>
<comment type="PTM">
    <text evidence="1">Phosphorylated.</text>
</comment>
<comment type="similarity">
    <text evidence="3">Belongs to the universal ribosomal protein uL10 family.</text>
</comment>
<proteinExistence type="inferred from homology"/>
<evidence type="ECO:0000250" key="1"/>
<evidence type="ECO:0000256" key="2">
    <source>
        <dbReference type="SAM" id="MobiDB-lite"/>
    </source>
</evidence>
<evidence type="ECO:0000305" key="3"/>
<sequence>MPSITTAKREYEERLVDCLTKYSCVLFVGMDNVRSQQVHDVGRALRAKAEFMMGKKTLQGKIVEKRAQAKDASPEAKHFNDQCEEYNLLSGNTGLIFTNNAVQEITSVLDAHRVKRAARVGAISPCDVIVAAGSTGMEPTQTSFFQALNIATKIAKGMVEIVTEKKVLSVGDKVDNSTATLLQKLNISPFYYQVNVLSVWDRGVLFTREDLMMTEDMVEKMLMEGLSNVAAMALGAGIPTSSTIGPMLVDAFKNLLAVSVATSYEFEEHNGKELREAAINGLLAGSCSAAAEPAAAAPAAPSAAAKEEPEESDEDDFGMGGLF</sequence>
<organism>
    <name type="scientific">Leishmania infantum</name>
    <dbReference type="NCBI Taxonomy" id="5671"/>
    <lineage>
        <taxon>Eukaryota</taxon>
        <taxon>Discoba</taxon>
        <taxon>Euglenozoa</taxon>
        <taxon>Kinetoplastea</taxon>
        <taxon>Metakinetoplastina</taxon>
        <taxon>Trypanosomatida</taxon>
        <taxon>Trypanosomatidae</taxon>
        <taxon>Leishmaniinae</taxon>
        <taxon>Leishmania</taxon>
    </lineage>
</organism>
<accession>P39097</accession>
<feature type="chain" id="PRO_0000154772" description="Large ribosomal subunit protein uL10">
    <location>
        <begin position="1"/>
        <end position="323"/>
    </location>
</feature>
<feature type="region of interest" description="Disordered" evidence="2">
    <location>
        <begin position="296"/>
        <end position="323"/>
    </location>
</feature>
<feature type="compositionally biased region" description="Acidic residues" evidence="2">
    <location>
        <begin position="308"/>
        <end position="317"/>
    </location>
</feature>